<protein>
    <recommendedName>
        <fullName evidence="22">Cleavage and polyadenylation specificity factor subunit 6</fullName>
    </recommendedName>
    <alternativeName>
        <fullName>Cleavage and polyadenylation specificity factor 68 kDa subunit</fullName>
        <shortName>CPSF 68 kDa subunit</shortName>
    </alternativeName>
    <alternativeName>
        <fullName evidence="21">Cleavage factor Im complex 68 kDa subunit</fullName>
        <shortName evidence="21">CFIm68</shortName>
    </alternativeName>
    <alternativeName>
        <fullName>Pre-mRNA cleavage factor Im 68 kDa subunit</fullName>
    </alternativeName>
    <alternativeName>
        <fullName>Protein HPBRII-4/7</fullName>
    </alternativeName>
</protein>
<keyword id="KW-0002">3D-structure</keyword>
<keyword id="KW-0025">Alternative splicing</keyword>
<keyword id="KW-0963">Cytoplasm</keyword>
<keyword id="KW-0903">Direct protein sequencing</keyword>
<keyword id="KW-0488">Methylation</keyword>
<keyword id="KW-0507">mRNA processing</keyword>
<keyword id="KW-0539">Nucleus</keyword>
<keyword id="KW-0597">Phosphoprotein</keyword>
<keyword id="KW-1267">Proteomics identification</keyword>
<keyword id="KW-1185">Reference proteome</keyword>
<keyword id="KW-0694">RNA-binding</keyword>
<evidence type="ECO:0000250" key="1">
    <source>
        <dbReference type="UniProtKB" id="Q6NVF9"/>
    </source>
</evidence>
<evidence type="ECO:0000255" key="2">
    <source>
        <dbReference type="PROSITE-ProRule" id="PRU00176"/>
    </source>
</evidence>
<evidence type="ECO:0000256" key="3">
    <source>
        <dbReference type="SAM" id="MobiDB-lite"/>
    </source>
</evidence>
<evidence type="ECO:0000269" key="4">
    <source>
    </source>
</evidence>
<evidence type="ECO:0000269" key="5">
    <source>
    </source>
</evidence>
<evidence type="ECO:0000269" key="6">
    <source>
    </source>
</evidence>
<evidence type="ECO:0000269" key="7">
    <source>
    </source>
</evidence>
<evidence type="ECO:0000269" key="8">
    <source>
    </source>
</evidence>
<evidence type="ECO:0000269" key="9">
    <source>
    </source>
</evidence>
<evidence type="ECO:0000269" key="10">
    <source>
    </source>
</evidence>
<evidence type="ECO:0000269" key="11">
    <source>
    </source>
</evidence>
<evidence type="ECO:0000269" key="12">
    <source>
    </source>
</evidence>
<evidence type="ECO:0000269" key="13">
    <source>
    </source>
</evidence>
<evidence type="ECO:0000269" key="14">
    <source>
    </source>
</evidence>
<evidence type="ECO:0000269" key="15">
    <source>
    </source>
</evidence>
<evidence type="ECO:0000269" key="16">
    <source>
    </source>
</evidence>
<evidence type="ECO:0000269" key="17">
    <source>
    </source>
</evidence>
<evidence type="ECO:0000269" key="18">
    <source>
    </source>
</evidence>
<evidence type="ECO:0000269" key="19">
    <source>
    </source>
</evidence>
<evidence type="ECO:0000303" key="20">
    <source>
    </source>
</evidence>
<evidence type="ECO:0000303" key="21">
    <source>
    </source>
</evidence>
<evidence type="ECO:0000305" key="22"/>
<evidence type="ECO:0000305" key="23">
    <source>
    </source>
</evidence>
<evidence type="ECO:0000312" key="24">
    <source>
        <dbReference type="HGNC" id="HGNC:13871"/>
    </source>
</evidence>
<evidence type="ECO:0007744" key="25">
    <source>
        <dbReference type="PDB" id="6GX9"/>
    </source>
</evidence>
<evidence type="ECO:0007744" key="26">
    <source>
    </source>
</evidence>
<evidence type="ECO:0007744" key="27">
    <source>
    </source>
</evidence>
<evidence type="ECO:0007744" key="28">
    <source>
    </source>
</evidence>
<evidence type="ECO:0007829" key="29">
    <source>
        <dbReference type="PDB" id="3P5T"/>
    </source>
</evidence>
<evidence type="ECO:0007829" key="30">
    <source>
        <dbReference type="PDB" id="3P6Y"/>
    </source>
</evidence>
<evidence type="ECO:0007829" key="31">
    <source>
        <dbReference type="PDB" id="3Q2S"/>
    </source>
</evidence>
<reference key="1">
    <citation type="journal article" date="1998" name="Mol. Cell">
        <title>Human pre-mRNA cleavage factor Im is related to spliceosomal SR proteins and can be reconstituted in vitro from recombinant subunits.</title>
        <authorList>
            <person name="Rueegsegger U."/>
            <person name="Blank D."/>
            <person name="Keller W."/>
        </authorList>
    </citation>
    <scope>NUCLEOTIDE SEQUENCE [MRNA] (ISOFORM 1)</scope>
    <scope>PROTEIN SEQUENCE OF 125-138 AND 162-168</scope>
    <scope>FUNCTION</scope>
    <scope>IDENTIFICATION IN THE CLEAVAGE FACTOR IM COMPLEX</scope>
    <scope>SUBCELLULAR LOCATION</scope>
    <source>
        <tissue>Leukemia</tissue>
    </source>
</reference>
<reference key="2">
    <citation type="submission" date="1995-06" db="EMBL/GenBank/DDBJ databases">
        <authorList>
            <person name="Fleischhauer K.L."/>
        </authorList>
    </citation>
    <scope>NUCLEOTIDE SEQUENCE [GENOMIC DNA / MRNA] (ISOFORM 1)</scope>
    <source>
        <tissue>Leukemia</tissue>
    </source>
</reference>
<reference key="3">
    <citation type="journal article" date="2004" name="Nat. Genet.">
        <title>Complete sequencing and characterization of 21,243 full-length human cDNAs.</title>
        <authorList>
            <person name="Ota T."/>
            <person name="Suzuki Y."/>
            <person name="Nishikawa T."/>
            <person name="Otsuki T."/>
            <person name="Sugiyama T."/>
            <person name="Irie R."/>
            <person name="Wakamatsu A."/>
            <person name="Hayashi K."/>
            <person name="Sato H."/>
            <person name="Nagai K."/>
            <person name="Kimura K."/>
            <person name="Makita H."/>
            <person name="Sekine M."/>
            <person name="Obayashi M."/>
            <person name="Nishi T."/>
            <person name="Shibahara T."/>
            <person name="Tanaka T."/>
            <person name="Ishii S."/>
            <person name="Yamamoto J."/>
            <person name="Saito K."/>
            <person name="Kawai Y."/>
            <person name="Isono Y."/>
            <person name="Nakamura Y."/>
            <person name="Nagahari K."/>
            <person name="Murakami K."/>
            <person name="Yasuda T."/>
            <person name="Iwayanagi T."/>
            <person name="Wagatsuma M."/>
            <person name="Shiratori A."/>
            <person name="Sudo H."/>
            <person name="Hosoiri T."/>
            <person name="Kaku Y."/>
            <person name="Kodaira H."/>
            <person name="Kondo H."/>
            <person name="Sugawara M."/>
            <person name="Takahashi M."/>
            <person name="Kanda K."/>
            <person name="Yokoi T."/>
            <person name="Furuya T."/>
            <person name="Kikkawa E."/>
            <person name="Omura Y."/>
            <person name="Abe K."/>
            <person name="Kamihara K."/>
            <person name="Katsuta N."/>
            <person name="Sato K."/>
            <person name="Tanikawa M."/>
            <person name="Yamazaki M."/>
            <person name="Ninomiya K."/>
            <person name="Ishibashi T."/>
            <person name="Yamashita H."/>
            <person name="Murakawa K."/>
            <person name="Fujimori K."/>
            <person name="Tanai H."/>
            <person name="Kimata M."/>
            <person name="Watanabe M."/>
            <person name="Hiraoka S."/>
            <person name="Chiba Y."/>
            <person name="Ishida S."/>
            <person name="Ono Y."/>
            <person name="Takiguchi S."/>
            <person name="Watanabe S."/>
            <person name="Yosida M."/>
            <person name="Hotuta T."/>
            <person name="Kusano J."/>
            <person name="Kanehori K."/>
            <person name="Takahashi-Fujii A."/>
            <person name="Hara H."/>
            <person name="Tanase T.-O."/>
            <person name="Nomura Y."/>
            <person name="Togiya S."/>
            <person name="Komai F."/>
            <person name="Hara R."/>
            <person name="Takeuchi K."/>
            <person name="Arita M."/>
            <person name="Imose N."/>
            <person name="Musashino K."/>
            <person name="Yuuki H."/>
            <person name="Oshima A."/>
            <person name="Sasaki N."/>
            <person name="Aotsuka S."/>
            <person name="Yoshikawa Y."/>
            <person name="Matsunawa H."/>
            <person name="Ichihara T."/>
            <person name="Shiohata N."/>
            <person name="Sano S."/>
            <person name="Moriya S."/>
            <person name="Momiyama H."/>
            <person name="Satoh N."/>
            <person name="Takami S."/>
            <person name="Terashima Y."/>
            <person name="Suzuki O."/>
            <person name="Nakagawa S."/>
            <person name="Senoh A."/>
            <person name="Mizoguchi H."/>
            <person name="Goto Y."/>
            <person name="Shimizu F."/>
            <person name="Wakebe H."/>
            <person name="Hishigaki H."/>
            <person name="Watanabe T."/>
            <person name="Sugiyama A."/>
            <person name="Takemoto M."/>
            <person name="Kawakami B."/>
            <person name="Yamazaki M."/>
            <person name="Watanabe K."/>
            <person name="Kumagai A."/>
            <person name="Itakura S."/>
            <person name="Fukuzumi Y."/>
            <person name="Fujimori Y."/>
            <person name="Komiyama M."/>
            <person name="Tashiro H."/>
            <person name="Tanigami A."/>
            <person name="Fujiwara T."/>
            <person name="Ono T."/>
            <person name="Yamada K."/>
            <person name="Fujii Y."/>
            <person name="Ozaki K."/>
            <person name="Hirao M."/>
            <person name="Ohmori Y."/>
            <person name="Kawabata A."/>
            <person name="Hikiji T."/>
            <person name="Kobatake N."/>
            <person name="Inagaki H."/>
            <person name="Ikema Y."/>
            <person name="Okamoto S."/>
            <person name="Okitani R."/>
            <person name="Kawakami T."/>
            <person name="Noguchi S."/>
            <person name="Itoh T."/>
            <person name="Shigeta K."/>
            <person name="Senba T."/>
            <person name="Matsumura K."/>
            <person name="Nakajima Y."/>
            <person name="Mizuno T."/>
            <person name="Morinaga M."/>
            <person name="Sasaki M."/>
            <person name="Togashi T."/>
            <person name="Oyama M."/>
            <person name="Hata H."/>
            <person name="Watanabe M."/>
            <person name="Komatsu T."/>
            <person name="Mizushima-Sugano J."/>
            <person name="Satoh T."/>
            <person name="Shirai Y."/>
            <person name="Takahashi Y."/>
            <person name="Nakagawa K."/>
            <person name="Okumura K."/>
            <person name="Nagase T."/>
            <person name="Nomura N."/>
            <person name="Kikuchi H."/>
            <person name="Masuho Y."/>
            <person name="Yamashita R."/>
            <person name="Nakai K."/>
            <person name="Yada T."/>
            <person name="Nakamura Y."/>
            <person name="Ohara O."/>
            <person name="Isogai T."/>
            <person name="Sugano S."/>
        </authorList>
    </citation>
    <scope>NUCLEOTIDE SEQUENCE [LARGE SCALE MRNA] (ISOFORM 1)</scope>
    <source>
        <tissue>Spleen</tissue>
    </source>
</reference>
<reference key="4">
    <citation type="submission" date="2005-04" db="EMBL/GenBank/DDBJ databases">
        <authorList>
            <person name="Totoki Y."/>
            <person name="Toyoda A."/>
            <person name="Takeda T."/>
            <person name="Sakaki Y."/>
            <person name="Tanaka A."/>
            <person name="Yokoyama S."/>
        </authorList>
    </citation>
    <scope>NUCLEOTIDE SEQUENCE [LARGE SCALE MRNA] (ISOFORM 1)</scope>
    <source>
        <tissue>Heart</tissue>
    </source>
</reference>
<reference key="5">
    <citation type="submission" date="2005-07" db="EMBL/GenBank/DDBJ databases">
        <authorList>
            <person name="Mural R.J."/>
            <person name="Istrail S."/>
            <person name="Sutton G.G."/>
            <person name="Florea L."/>
            <person name="Halpern A.L."/>
            <person name="Mobarry C.M."/>
            <person name="Lippert R."/>
            <person name="Walenz B."/>
            <person name="Shatkay H."/>
            <person name="Dew I."/>
            <person name="Miller J.R."/>
            <person name="Flanigan M.J."/>
            <person name="Edwards N.J."/>
            <person name="Bolanos R."/>
            <person name="Fasulo D."/>
            <person name="Halldorsson B.V."/>
            <person name="Hannenhalli S."/>
            <person name="Turner R."/>
            <person name="Yooseph S."/>
            <person name="Lu F."/>
            <person name="Nusskern D.R."/>
            <person name="Shue B.C."/>
            <person name="Zheng X.H."/>
            <person name="Zhong F."/>
            <person name="Delcher A.L."/>
            <person name="Huson D.H."/>
            <person name="Kravitz S.A."/>
            <person name="Mouchard L."/>
            <person name="Reinert K."/>
            <person name="Remington K.A."/>
            <person name="Clark A.G."/>
            <person name="Waterman M.S."/>
            <person name="Eichler E.E."/>
            <person name="Adams M.D."/>
            <person name="Hunkapiller M.W."/>
            <person name="Myers E.W."/>
            <person name="Venter J.C."/>
        </authorList>
    </citation>
    <scope>NUCLEOTIDE SEQUENCE [LARGE SCALE GENOMIC DNA]</scope>
</reference>
<reference key="6">
    <citation type="journal article" date="2004" name="Genome Res.">
        <title>The status, quality, and expansion of the NIH full-length cDNA project: the Mammalian Gene Collection (MGC).</title>
        <authorList>
            <consortium name="The MGC Project Team"/>
        </authorList>
    </citation>
    <scope>NUCLEOTIDE SEQUENCE [LARGE SCALE MRNA] (ISOFORMS 2 AND 3)</scope>
    <source>
        <tissue>Kidney</tissue>
    </source>
</reference>
<reference key="7">
    <citation type="journal article" date="1996" name="J. Biol. Chem.">
        <title>Purification and characterization of human cleavage factor Im involved in the 3' end processing of messenger RNA precursors.</title>
        <authorList>
            <person name="Rueegsegger U."/>
            <person name="Beyer K."/>
            <person name="Keller W."/>
        </authorList>
    </citation>
    <scope>FUNCTION</scope>
    <scope>IDENTIFICATION IN A CLEAVAGE FACTOR IM COMPLEX</scope>
</reference>
<reference key="8">
    <citation type="journal article" date="2003" name="Mol. Cell">
        <title>A mechanism for the regulation of pre-mRNA 3' processing by human cleavage factor Im.</title>
        <authorList>
            <person name="Brown K.M."/>
            <person name="Gilmartin G.M."/>
        </authorList>
    </citation>
    <scope>FUNCTION</scope>
</reference>
<reference key="9">
    <citation type="journal article" date="2003" name="RNA">
        <title>Association of polyadenylation cleavage factor I with U1 snRNP.</title>
        <authorList>
            <person name="Awasthi S."/>
            <person name="Alwine J.C."/>
        </authorList>
    </citation>
    <scope>IDENTIFICATION IN A CLEAVAGE FACTOR IM COMPLEX</scope>
    <scope>INTERACTION WITH NUDT21/CPSF5 AND SNRNP70</scope>
</reference>
<reference key="10">
    <citation type="journal article" date="2004" name="J. Biol. Chem.">
        <title>Distinct sequence motifs within the 68-kDa subunit of cleavage factor Im mediate RNA binding, protein-protein interactions, and subcellular localization.</title>
        <authorList>
            <person name="Dettwiler S."/>
            <person name="Aringhieri C."/>
            <person name="Cardinale S."/>
            <person name="Keller W."/>
            <person name="Barabino S.M."/>
        </authorList>
    </citation>
    <scope>FUNCTION</scope>
    <scope>IDENTIFICATION IN A CLEAVAGE FACTOR IM COMPLEX</scope>
    <scope>INTERACTION WITH NUDT21/CPSF5; SRSF3; SRSF7 AND TRA2B</scope>
    <scope>RNA-BINDING</scope>
    <scope>MUTAGENESIS OF GLY-86 AND ASN-87</scope>
    <scope>SUBCELLULAR LOCATION</scope>
    <scope>DOMAIN</scope>
</reference>
<reference key="11">
    <citation type="journal article" date="2007" name="Mol. Biol. Cell">
        <title>Subnuclear localization and dynamics of the pre-mRNA 3' end processing factor mammalian cleavage factor I 68-kDa subunit.</title>
        <authorList>
            <person name="Cardinale S."/>
            <person name="Cisterna B."/>
            <person name="Bonetti P."/>
            <person name="Aringhieri C."/>
            <person name="Biggiogera M."/>
            <person name="Barabino S.M."/>
        </authorList>
    </citation>
    <scope>SUBCELLULAR LOCATION</scope>
    <scope>DOMAIN</scope>
</reference>
<reference key="12">
    <citation type="journal article" date="2008" name="J. Proteome Res.">
        <title>Combining protein-based IMAC, peptide-based IMAC, and MudPIT for efficient phosphoproteomic analysis.</title>
        <authorList>
            <person name="Cantin G.T."/>
            <person name="Yi W."/>
            <person name="Lu B."/>
            <person name="Park S.K."/>
            <person name="Xu T."/>
            <person name="Lee J.-D."/>
            <person name="Yates J.R. III"/>
        </authorList>
    </citation>
    <scope>PHOSPHORYLATION [LARGE SCALE ANALYSIS] AT THR-404</scope>
    <scope>IDENTIFICATION BY MASS SPECTROMETRY [LARGE SCALE ANALYSIS]</scope>
    <source>
        <tissue>Cervix carcinoma</tissue>
    </source>
</reference>
<reference key="13">
    <citation type="journal article" date="2008" name="Proc. Natl. Acad. Sci. U.S.A.">
        <title>A quantitative atlas of mitotic phosphorylation.</title>
        <authorList>
            <person name="Dephoure N."/>
            <person name="Zhou C."/>
            <person name="Villen J."/>
            <person name="Beausoleil S.A."/>
            <person name="Bakalarski C.E."/>
            <person name="Elledge S.J."/>
            <person name="Gygi S.P."/>
        </authorList>
    </citation>
    <scope>IDENTIFICATION BY MASS SPECTROMETRY [LARGE SCALE ANALYSIS]</scope>
    <source>
        <tissue>Cervix carcinoma</tissue>
    </source>
</reference>
<reference key="14">
    <citation type="journal article" date="2009" name="Mol. Biol. Cell">
        <title>Mammalian pre-mRNA 3' end processing factor CF I m 68 functions in mRNA export.</title>
        <authorList>
            <person name="Ruepp M.D."/>
            <person name="Aringhieri C."/>
            <person name="Vivarelli S."/>
            <person name="Cardinale S."/>
            <person name="Paro S."/>
            <person name="Schuemperli D."/>
            <person name="Barabino S.M."/>
        </authorList>
    </citation>
    <scope>FUNCTION</scope>
    <scope>SUBCELLULAR LOCATION</scope>
    <scope>INTERACTION WITH NXF1; NUDT21/CPSF5; UPF1 AND UPF3B</scope>
    <scope>ASSOCIATION WITH THE EXON JUNCTION COMPLEX AND 80S RIBOSOME PARTICLE</scope>
    <scope>DOMAIN</scope>
</reference>
<reference key="15">
    <citation type="journal article" date="2009" name="Sci. Signal.">
        <title>Quantitative phosphoproteomic analysis of T cell receptor signaling reveals system-wide modulation of protein-protein interactions.</title>
        <authorList>
            <person name="Mayya V."/>
            <person name="Lundgren D.H."/>
            <person name="Hwang S.-I."/>
            <person name="Rezaul K."/>
            <person name="Wu L."/>
            <person name="Eng J.K."/>
            <person name="Rodionov V."/>
            <person name="Han D.K."/>
        </authorList>
    </citation>
    <scope>PHOSPHORYLATION [LARGE SCALE ANALYSIS] AT THR-407</scope>
    <scope>IDENTIFICATION BY MASS SPECTROMETRY [LARGE SCALE ANALYSIS]</scope>
    <source>
        <tissue>Leukemic T-cell</tissue>
    </source>
</reference>
<reference key="16">
    <citation type="journal article" date="2010" name="Genes Cells">
        <title>Evidence that cleavage factor Im is a heterotetrameric protein complex controlling alternative polyadenylation.</title>
        <authorList>
            <person name="Kim S."/>
            <person name="Yamamoto J."/>
            <person name="Chen Y."/>
            <person name="Aida M."/>
            <person name="Wada T."/>
            <person name="Handa H."/>
            <person name="Yamaguchi Y."/>
        </authorList>
    </citation>
    <scope>FUNCTION</scope>
    <scope>IDENTIFICATION IN THE CLEAVAGE FACTOR IM COMPLEX</scope>
    <scope>SUBCELLULAR LOCATION</scope>
</reference>
<reference key="17">
    <citation type="journal article" date="2010" name="RNA">
        <title>Arginine methylation in subunits of mammalian pre-mRNA cleavage factor I.</title>
        <authorList>
            <person name="Martin G."/>
            <person name="Ostareck-Lederer A."/>
            <person name="Chari A."/>
            <person name="Neuenkirchen N."/>
            <person name="Dettwiler S."/>
            <person name="Blank D."/>
            <person name="Rueegsegger U."/>
            <person name="Fischer U."/>
            <person name="Keller W."/>
        </authorList>
    </citation>
    <scope>METHYLATION</scope>
    <scope>MUTAGENESIS OF ARG-202; ARG-204 AND ARG-206</scope>
</reference>
<reference key="18">
    <citation type="journal article" date="2011" name="BMC Syst. Biol.">
        <title>Initial characterization of the human central proteome.</title>
        <authorList>
            <person name="Burkard T.R."/>
            <person name="Planyavsky M."/>
            <person name="Kaupe I."/>
            <person name="Breitwieser F.P."/>
            <person name="Buerckstuemmer T."/>
            <person name="Bennett K.L."/>
            <person name="Superti-Furga G."/>
            <person name="Colinge J."/>
        </authorList>
    </citation>
    <scope>IDENTIFICATION BY MASS SPECTROMETRY [LARGE SCALE ANALYSIS]</scope>
</reference>
<reference key="19">
    <citation type="journal article" date="2012" name="RNA Biol.">
        <title>Cleavage factor Im is a key regulator of 3' UTR length.</title>
        <authorList>
            <person name="Gruber A.R."/>
            <person name="Martin G."/>
            <person name="Keller W."/>
            <person name="Zavolan M."/>
        </authorList>
    </citation>
    <scope>FUNCTION</scope>
    <scope>SUBUNIT</scope>
</reference>
<reference key="20">
    <citation type="journal article" date="2013" name="J. Proteome Res.">
        <title>Toward a comprehensive characterization of a human cancer cell phosphoproteome.</title>
        <authorList>
            <person name="Zhou H."/>
            <person name="Di Palma S."/>
            <person name="Preisinger C."/>
            <person name="Peng M."/>
            <person name="Polat A.N."/>
            <person name="Heck A.J."/>
            <person name="Mohammed S."/>
        </authorList>
    </citation>
    <scope>PHOSPHORYLATION [LARGE SCALE ANALYSIS] AT THR-404 AND THR-407</scope>
    <scope>IDENTIFICATION BY MASS SPECTROMETRY [LARGE SCALE ANALYSIS]</scope>
    <source>
        <tissue>Cervix carcinoma</tissue>
        <tissue>Erythroleukemia</tissue>
    </source>
</reference>
<reference key="21">
    <citation type="journal article" date="2013" name="PLoS Pathog.">
        <title>Nucleoporin NUP153 phenylalanine-glycine motifs engage a common binding pocket within the HIV-1 capsid protein to mediate lentiviral infectivity.</title>
        <authorList>
            <person name="Matreyek K.A."/>
            <person name="Yucel S.S."/>
            <person name="Li X."/>
            <person name="Engelman A."/>
        </authorList>
    </citation>
    <scope>FUNCTION (MICROBIAL INFECTION)</scope>
    <scope>INTERACTION WITH HIV-1 CAPSID PROTEIN P24</scope>
</reference>
<reference key="22">
    <citation type="journal article" date="2014" name="J. Proteomics">
        <title>An enzyme assisted RP-RPLC approach for in-depth analysis of human liver phosphoproteome.</title>
        <authorList>
            <person name="Bian Y."/>
            <person name="Song C."/>
            <person name="Cheng K."/>
            <person name="Dong M."/>
            <person name="Wang F."/>
            <person name="Huang J."/>
            <person name="Sun D."/>
            <person name="Wang L."/>
            <person name="Ye M."/>
            <person name="Zou H."/>
        </authorList>
    </citation>
    <scope>IDENTIFICATION BY MASS SPECTROMETRY [LARGE SCALE ANALYSIS]</scope>
    <source>
        <tissue>Liver</tissue>
    </source>
</reference>
<reference key="23">
    <citation type="journal article" date="2015" name="Proteomics">
        <title>N-terminome analysis of the human mitochondrial proteome.</title>
        <authorList>
            <person name="Vaca Jacome A.S."/>
            <person name="Rabilloud T."/>
            <person name="Schaeffer-Reiss C."/>
            <person name="Rompais M."/>
            <person name="Ayoub D."/>
            <person name="Lane L."/>
            <person name="Bairoch A."/>
            <person name="Van Dorsselaer A."/>
            <person name="Carapito C."/>
        </authorList>
    </citation>
    <scope>IDENTIFICATION BY MASS SPECTROMETRY [LARGE SCALE ANALYSIS]</scope>
</reference>
<reference key="24">
    <citation type="journal article" date="2018" name="Cell Discov.">
        <title>VIRMA mediates preferential m6A mRNA methylation in 3'UTR and near stop codon and associates with alternative polyadenylation.</title>
        <authorList>
            <person name="Yue Y."/>
            <person name="Liu J."/>
            <person name="Cui X."/>
            <person name="Cao J."/>
            <person name="Luo G."/>
            <person name="Zhang Z."/>
            <person name="Cheng T."/>
            <person name="Gao M."/>
            <person name="Shu X."/>
            <person name="Ma H."/>
            <person name="Wang F."/>
            <person name="Wang X."/>
            <person name="Shen B."/>
            <person name="Wang Y."/>
            <person name="Feng X."/>
            <person name="He C."/>
            <person name="Liu J."/>
        </authorList>
    </citation>
    <scope>INTERACTION WITH VIRMA</scope>
</reference>
<reference key="25">
    <citation type="journal article" date="2018" name="J. Virol.">
        <title>Nup153 Unlocks the Nuclear Pore Complex for HIV-1 Nuclear Translocation in Nondividing Cells.</title>
        <authorList>
            <person name="Buffone C."/>
            <person name="Martinez-Lopez A."/>
            <person name="Fricke T."/>
            <person name="Opp S."/>
            <person name="Severgnini M."/>
            <person name="Cifola I."/>
            <person name="Petiti L."/>
            <person name="Frabetti S."/>
            <person name="Skorupka K."/>
            <person name="Zadrozny K.K."/>
            <person name="Ganser-Pornillos B.K."/>
            <person name="Pornillos O."/>
            <person name="Di Nunzio F."/>
            <person name="Diaz-Griffero F."/>
        </authorList>
    </citation>
    <scope>INTERACTION WITH HIV-1 CAPSID PROTEIN P24</scope>
</reference>
<reference key="26">
    <citation type="journal article" date="2018" name="Mol. Cell">
        <title>Molecular mechanisms for CFIm-mediated regulation of mRNA alternative polyadenylation.</title>
        <authorList>
            <person name="Zhu Y."/>
            <person name="Wang X."/>
            <person name="Forouzmand E."/>
            <person name="Jeong J."/>
            <person name="Qiao F."/>
            <person name="Sowd G.A."/>
            <person name="Engelman A.N."/>
            <person name="Xie X."/>
            <person name="Hertel K.J."/>
            <person name="Shi Y."/>
        </authorList>
    </citation>
    <scope>FUNCTION</scope>
    <scope>INTERACTION WITH NUDT21/CPSF5 AND FIP1L1</scope>
    <scope>IDENTIFICATION IN THE MRNA 3'-PROCESSING COMPLEX</scope>
    <scope>PHOSPHORYLATION</scope>
    <scope>DOMAIN</scope>
</reference>
<reference key="27">
    <citation type="journal article" date="2011" name="Structure">
        <title>Crystal structure of a human cleavage factor CFI(m)25/CFI(m)68/RNA complex provides an insight into poly(A) site recognition and RNA looping.</title>
        <authorList>
            <person name="Yang Q."/>
            <person name="Coseno M."/>
            <person name="Gilmartin G.M."/>
            <person name="Doublie S."/>
        </authorList>
    </citation>
    <scope>X-RAY CRYSTALLOGRAPHY (2.9 ANGSTROMS) OF 13-235 IN COMPLEX WITH NUDT21/CPSF5 AND RNA</scope>
    <scope>FUNCTION</scope>
    <scope>SUBUNIT</scope>
    <scope>MUTAGENESIS OF TYR-84; 90-TRP-TRP-91; ASP-94; GLU-111; PHE-126 AND LEU-128</scope>
</reference>
<reference evidence="25" key="28">
    <citation type="journal article" date="2019" name="Nucleic Acids Res.">
        <title>Differential role for phosphorylation in alternative polyadenylation function versus nuclear import of SR-like protein CPSF6.</title>
        <authorList>
            <person name="Jang S."/>
            <person name="Cook N.J."/>
            <person name="Pye V.E."/>
            <person name="Bedwell G.J."/>
            <person name="Dudek A.M."/>
            <person name="Singh P.K."/>
            <person name="Cherepanov P."/>
            <person name="Engelman A.N."/>
        </authorList>
    </citation>
    <scope>X-RAY CRYSTALLOGRAPHY (2.70 ANGSTROMS) OF 481-550 IN COMPLEX WITH TNPO3</scope>
    <scope>SUBCELLULAR LOCATION</scope>
    <scope>INTERACTION WITH TNPO3</scope>
    <scope>PHOSPHORYLATION AT THR-157; THR-404; THR-407; SER-494; SER-500; SER-511; SER-513 AND SER-525</scope>
</reference>
<name>CPSF6_HUMAN</name>
<comment type="function">
    <text evidence="5 6 8 10 11 12 14 18 19">Component of the cleavage factor Im (CFIm) complex that functions as an activator of the pre-mRNA 3'-end cleavage and polyadenylation processing required for the maturation of pre-mRNA into functional mRNAs (PubMed:14690600, PubMed:29276085, PubMed:8626397, PubMed:9659921). CFIm contributes to the recruitment of multiprotein complexes on specific sequences on the pre-mRNA 3'-end, so called cleavage and polyadenylation signals (pA signals) (PubMed:14690600, PubMed:8626397, PubMed:9659921). Most pre-mRNAs contain multiple pA signals, resulting in alternative cleavage and polyadenylation (APA) producing mRNAs with variable 3'-end formation (PubMed:23187700, PubMed:29276085). The CFIm complex acts as a key regulator of cleavage and polyadenylation site choice during APA through its binding to 5'-UGUA-3' elements localized in the 3'-untranslated region (UTR) for a huge number of pre-mRNAs (PubMed:20695905, PubMed:29276085). CPSF6 enhances NUDT21/CPSF5 binding to 5'-UGUA-3' elements localized upstream of pA signals and promotes RNA looping, and hence activates directly the mRNA 3'-processing machinery (PubMed:15169763, PubMed:21295486, PubMed:29276085). Plays a role in mRNA export (PubMed:19864460).</text>
</comment>
<comment type="function">
    <text evidence="13">(Microbial infection) Binds HIV-1 capsid-nucleocapsid (HIV-1 CA-NC) complexes and might thereby promote the integration of the virus in the nucleus of dividing cells (in vitro).</text>
</comment>
<comment type="subunit">
    <text evidence="1 4 6 8 10 11 12 14 15 17 18 19">Component of the cleavage factor Im (CFIm) complex which is a heterotetramer composed of two subunits of NUDT21/CPSF5 and two subunits of CPSF6 or CPSF7 or a heterodimer of CPSF6 and CPSF7 (PubMed:14561889, PubMed:20695905, PubMed:23187700, PubMed:8626397, PubMed:9659921). The cleavage factor Im (CFIm) complex associates with the CPSF and CSTF complexes to promote the assembly of the core mRNA 3'-processing machinery (PubMed:29276085). Associates with the exon junction complex (EJC) (PubMed:19864460). Associates with the 80S ribosome particle (PubMed:19864460). Interacts (via the RRM domain) with NUDT21/CPSF5; this interaction is direct and enhances binding to RNA (PubMed:14561889, PubMed:15169763, PubMed:19864460, PubMed:21295486, PubMed:29276085). Interacts (via Arg/Ser-rich domain) with FIP1L1 (preferentially via unphosphorylated form and Arg/Glu/Asp-rich domain); this interaction mediates, at least in part, the interaction between the CFIm and CPSF complexes and may be inhibited by CPSF6 hyper-phosphorylation (PubMed:29276085). Interacts (via N-terminus) with NXF1; this interaction is direct (PubMed:19864460). Interacts with SRSF3 (PubMed:15169763). Interacts with SRSF7 (PubMed:15169763). Interacts with SNRNP70 (PubMed:14561889). Interacts with TRA2B/SFRS10 (PubMed:15169763). Interacts with UPF1 (PubMed:19864460). Interacts with UPF3B (PubMed:19864460). Interacts with VIRMA (PubMed:29507755). Interacts (via Arg/Ser-rich domain) with TNPO3; promoting nuclear import of CPSF6 independently of its phosphorylation status (PubMed:30916345). Interacts with YTHDC1 (By similarity).</text>
</comment>
<comment type="subunit">
    <text evidence="13 16">(Microbial infection) Interacts (via C-terminus) with HIV-1 capsid protein p24 (CA).</text>
</comment>
<comment type="interaction">
    <interactant intactId="EBI-358410">
        <id>Q16630</id>
    </interactant>
    <interactant intactId="EBI-742909">
        <id>Q9H6L4</id>
        <label>ARMC7</label>
    </interactant>
    <organismsDiffer>false</organismsDiffer>
    <experiments>4</experiments>
</comment>
<comment type="interaction">
    <interactant intactId="EBI-358410">
        <id>Q16630</id>
    </interactant>
    <interactant intactId="EBI-355720">
        <id>O43809</id>
        <label>NUDT21</label>
    </interactant>
    <organismsDiffer>false</organismsDiffer>
    <experiments>10</experiments>
</comment>
<comment type="interaction">
    <interactant intactId="EBI-358410">
        <id>Q16630</id>
    </interactant>
    <interactant intactId="EBI-746259">
        <id>Q96DC9</id>
        <label>OTUB2</label>
    </interactant>
    <organismsDiffer>false</organismsDiffer>
    <experiments>3</experiments>
</comment>
<comment type="interaction">
    <interactant intactId="EBI-358410">
        <id>Q16630</id>
    </interactant>
    <interactant intactId="EBI-740019">
        <id>O15162</id>
        <label>PLSCR1</label>
    </interactant>
    <organismsDiffer>false</organismsDiffer>
    <experiments>2</experiments>
</comment>
<comment type="interaction">
    <interactant intactId="EBI-358410">
        <id>Q16630</id>
    </interactant>
    <interactant intactId="EBI-2557649">
        <id>Q9Y3C6</id>
        <label>PPIL1</label>
    </interactant>
    <organismsDiffer>false</organismsDiffer>
    <experiments>4</experiments>
</comment>
<comment type="interaction">
    <interactant intactId="EBI-358410">
        <id>Q16630</id>
    </interactant>
    <interactant intactId="EBI-10249783">
        <id>Q6FIE9</id>
        <label>TOLLIP</label>
    </interactant>
    <organismsDiffer>false</organismsDiffer>
    <experiments>3</experiments>
</comment>
<comment type="interaction">
    <interactant intactId="EBI-358410">
        <id>Q16630</id>
    </interactant>
    <interactant intactId="EBI-742157">
        <id>Q9H0M0</id>
        <label>WWP1</label>
    </interactant>
    <organismsDiffer>false</organismsDiffer>
    <experiments>6</experiments>
</comment>
<comment type="interaction">
    <interactant intactId="EBI-358410">
        <id>Q16630</id>
    </interactant>
    <interactant intactId="EBI-743923">
        <id>O00308</id>
        <label>WWP2</label>
    </interactant>
    <organismsDiffer>false</organismsDiffer>
    <experiments>4</experiments>
</comment>
<comment type="interaction">
    <interactant intactId="EBI-1019636">
        <id>Q16630-1</id>
    </interactant>
    <interactant intactId="EBI-355720">
        <id>O43809</id>
        <label>NUDT21</label>
    </interactant>
    <organismsDiffer>false</organismsDiffer>
    <experiments>4</experiments>
</comment>
<comment type="interaction">
    <interactant intactId="EBI-11088043">
        <id>Q16630-2</id>
    </interactant>
    <interactant intactId="EBI-742909">
        <id>Q9H6L4</id>
        <label>ARMC7</label>
    </interactant>
    <organismsDiffer>false</organismsDiffer>
    <experiments>3</experiments>
</comment>
<comment type="interaction">
    <interactant intactId="EBI-11088043">
        <id>Q16630-2</id>
    </interactant>
    <interactant intactId="EBI-747185">
        <id>O95817</id>
        <label>BAG3</label>
    </interactant>
    <organismsDiffer>false</organismsDiffer>
    <experiments>3</experiments>
</comment>
<comment type="interaction">
    <interactant intactId="EBI-11088043">
        <id>Q16630-2</id>
    </interactant>
    <interactant intactId="EBI-713635">
        <id>O43639</id>
        <label>NCK2</label>
    </interactant>
    <organismsDiffer>false</organismsDiffer>
    <experiments>3</experiments>
</comment>
<comment type="interaction">
    <interactant intactId="EBI-11088043">
        <id>Q16630-2</id>
    </interactant>
    <interactant intactId="EBI-355720">
        <id>O43809</id>
        <label>NUDT21</label>
    </interactant>
    <organismsDiffer>false</organismsDiffer>
    <experiments>7</experiments>
</comment>
<comment type="interaction">
    <interactant intactId="EBI-11088043">
        <id>Q16630-2</id>
    </interactant>
    <interactant intactId="EBI-373242">
        <id>Q9UK80</id>
        <label>USP21</label>
    </interactant>
    <organismsDiffer>false</organismsDiffer>
    <experiments>3</experiments>
</comment>
<comment type="interaction">
    <interactant intactId="EBI-11088043">
        <id>Q16630-2</id>
    </interactant>
    <interactant intactId="EBI-12040603">
        <id>Q9NZC7-5</id>
        <label>WWOX</label>
    </interactant>
    <organismsDiffer>false</organismsDiffer>
    <experiments>3</experiments>
</comment>
<comment type="interaction">
    <interactant intactId="EBI-11088043">
        <id>Q16630-2</id>
    </interactant>
    <interactant intactId="EBI-515331">
        <id>P07947</id>
        <label>YES1</label>
    </interactant>
    <organismsDiffer>false</organismsDiffer>
    <experiments>3</experiments>
</comment>
<comment type="interaction">
    <interactant intactId="EBI-11088043">
        <id>Q16630-2</id>
    </interactant>
    <interactant intactId="EBI-746595">
        <id>Q96E35</id>
        <label>ZMYND19</label>
    </interactant>
    <organismsDiffer>false</organismsDiffer>
    <experiments>3</experiments>
</comment>
<comment type="subcellular location">
    <subcellularLocation>
        <location evidence="6 8 10 17 19">Nucleus</location>
    </subcellularLocation>
    <subcellularLocation>
        <location evidence="7">Nucleus</location>
        <location evidence="7">Nucleoplasm</location>
    </subcellularLocation>
    <subcellularLocation>
        <location evidence="7">Nucleus speckle</location>
    </subcellularLocation>
    <subcellularLocation>
        <location evidence="8 17">Cytoplasm</location>
    </subcellularLocation>
    <text evidence="6 7 8 17">Shuttles between the nucleus and the cytoplasm in a transcription- and XPO1/CRM1-independent manner, most probably in complex with the cleavage factor Im complex (CFIm) (PubMed:19864460). Colocalizes with PSPC1 in punctate subnuclear structures often located adjacent to nuclear speckles, called paraspeckles, and corresponding to interchromatin granules-associated zones (IGAZs) (PubMed:17267687). Distribution in speckles and paraspeckles varies during the cell cycle (PubMed:17267687). Associates at sites of active transcription on nascent perichromatin fibrils (PFs) and perichromatin granules (PubMed:17267687). Nuclear import is mediated via interaction with TNPO3 independently of CPSF6 phosphorylation status (PubMed:30916345).</text>
</comment>
<comment type="alternative products">
    <event type="alternative splicing"/>
    <isoform>
        <id>Q16630-1</id>
        <name>1</name>
        <sequence type="displayed"/>
    </isoform>
    <isoform>
        <id>Q16630-2</id>
        <name>2</name>
        <sequence type="described" ref="VSP_017192"/>
    </isoform>
    <isoform>
        <id>Q16630-3</id>
        <name>3</name>
        <sequence type="described" ref="VSP_017191"/>
    </isoform>
</comment>
<comment type="domain">
    <text evidence="14">Contains an Arg/Ser-rich domain composed of arginine-serine dipeptide repeats within the C-terminal region that is necessary and sufficient for activating mRNA 3'-processing and alternative polyadenylation (APA).</text>
</comment>
<comment type="PTM">
    <text evidence="14">Phosphorylated (PubMed:29276085). Phosphorylated in the Arg/Ser-rich domain by SRPK1, in vitro (PubMed:29276085).</text>
</comment>
<comment type="PTM">
    <text evidence="9">Symmetrically dimethylated on arginine residues in the GAR motif by PRMT5 in a WDR77- and CLNS1A-dependent manner (PubMed:20562214). Asymmetrically dimethylated on arginine residues in the GAR motif by PRMT1 (PubMed:20562214).</text>
</comment>
<comment type="similarity">
    <text evidence="22">Belongs to the RRM CPSF6/7 family.</text>
</comment>
<feature type="chain" id="PRO_0000081521" description="Cleavage and polyadenylation specificity factor subunit 6">
    <location>
        <begin position="1"/>
        <end position="551"/>
    </location>
</feature>
<feature type="domain" description="RRM" evidence="2">
    <location>
        <begin position="81"/>
        <end position="161"/>
    </location>
</feature>
<feature type="region of interest" description="Necessary for interaction with NXF1" evidence="8">
    <location>
        <begin position="1"/>
        <end position="213"/>
    </location>
</feature>
<feature type="region of interest" description="Necessary for interaction with NUDT21/CPSF5" evidence="6">
    <location>
        <begin position="81"/>
        <end position="161"/>
    </location>
</feature>
<feature type="region of interest" description="Necessary for nuclear paraspeckles localization" evidence="7">
    <location>
        <begin position="81"/>
        <end position="161"/>
    </location>
</feature>
<feature type="region of interest" description="Disordered" evidence="3">
    <location>
        <begin position="169"/>
        <end position="411"/>
    </location>
</feature>
<feature type="region of interest" description="(Microbial infection) Binds to HIV-1 capsid protein p24 (CA)" evidence="13">
    <location>
        <begin position="358"/>
        <end position="551"/>
    </location>
</feature>
<feature type="region of interest" description="Sufficient for nuclear speckle localization" evidence="7">
    <location>
        <begin position="404"/>
        <end position="551"/>
    </location>
</feature>
<feature type="region of interest" description="Necessary for RNA-binding" evidence="6">
    <location>
        <begin position="405"/>
        <end position="551"/>
    </location>
</feature>
<feature type="region of interest" description="Disordered" evidence="3">
    <location>
        <begin position="477"/>
        <end position="551"/>
    </location>
</feature>
<feature type="region of interest" description="Necessary for interaction with SRSF3, SRSF7 and TRA2B/SFRS10" evidence="6">
    <location>
        <begin position="481"/>
        <end position="551"/>
    </location>
</feature>
<feature type="region of interest" description="Arg/Ser-rich domain" evidence="14 17">
    <location>
        <begin position="490"/>
        <end position="551"/>
    </location>
</feature>
<feature type="region of interest" description="Sufficient for nuclear targeting" evidence="6">
    <location>
        <begin position="510"/>
        <end position="551"/>
    </location>
</feature>
<feature type="short sequence motif" description="GAR" evidence="9">
    <location>
        <begin position="202"/>
        <end position="206"/>
    </location>
</feature>
<feature type="compositionally biased region" description="Polar residues" evidence="3">
    <location>
        <begin position="169"/>
        <end position="180"/>
    </location>
</feature>
<feature type="compositionally biased region" description="Low complexity" evidence="3">
    <location>
        <begin position="207"/>
        <end position="219"/>
    </location>
</feature>
<feature type="compositionally biased region" description="Pro residues" evidence="3">
    <location>
        <begin position="220"/>
        <end position="265"/>
    </location>
</feature>
<feature type="compositionally biased region" description="Pro residues" evidence="3">
    <location>
        <begin position="285"/>
        <end position="366"/>
    </location>
</feature>
<feature type="compositionally biased region" description="Pro residues" evidence="3">
    <location>
        <begin position="377"/>
        <end position="388"/>
    </location>
</feature>
<feature type="compositionally biased region" description="Basic and acidic residues" evidence="3">
    <location>
        <begin position="389"/>
        <end position="404"/>
    </location>
</feature>
<feature type="compositionally biased region" description="Basic and acidic residues" evidence="3">
    <location>
        <begin position="489"/>
        <end position="503"/>
    </location>
</feature>
<feature type="compositionally biased region" description="Basic residues" evidence="3">
    <location>
        <begin position="504"/>
        <end position="514"/>
    </location>
</feature>
<feature type="compositionally biased region" description="Basic and acidic residues" evidence="3">
    <location>
        <begin position="515"/>
        <end position="551"/>
    </location>
</feature>
<feature type="modified residue" description="Phosphothreonine" evidence="17">
    <location>
        <position position="157"/>
    </location>
</feature>
<feature type="modified residue" description="Phosphothreonine" evidence="17 26 28">
    <location>
        <position position="404"/>
    </location>
</feature>
<feature type="modified residue" description="Phosphothreonine" evidence="17 27 28">
    <location>
        <position position="407"/>
    </location>
</feature>
<feature type="modified residue" description="Phosphoserine" evidence="17">
    <location>
        <position position="494"/>
    </location>
</feature>
<feature type="modified residue" description="Phosphoserine" evidence="17">
    <location>
        <position position="500"/>
    </location>
</feature>
<feature type="modified residue" description="Phosphoserine" evidence="17">
    <location>
        <position position="511"/>
    </location>
</feature>
<feature type="modified residue" description="Phosphoserine" evidence="17">
    <location>
        <position position="513"/>
    </location>
</feature>
<feature type="modified residue" description="Phosphoserine" evidence="23">
    <location>
        <position position="525"/>
    </location>
</feature>
<feature type="splice variant" id="VSP_017191" description="In isoform 3." evidence="20">
    <location>
        <begin position="188"/>
        <end position="260"/>
    </location>
</feature>
<feature type="splice variant" id="VSP_017192" description="In isoform 2." evidence="20">
    <original>P</original>
    <variation>PGNLIKHLVKGTRPLFLETRIPWHMGHSIEEIPIFGLK</variation>
    <location>
        <position position="231"/>
    </location>
</feature>
<feature type="mutagenesis site" description="Reduces affinity for UGUA RNA by 40%; when associated with A-128." evidence="11">
    <original>Y</original>
    <variation>A</variation>
    <location>
        <position position="84"/>
    </location>
</feature>
<feature type="mutagenesis site" description="Abolishes interaction with NUDT21/CPSF5; when associated with V-87." evidence="6">
    <original>G</original>
    <variation>V</variation>
    <location>
        <position position="86"/>
    </location>
</feature>
<feature type="mutagenesis site" description="Abolishes interaction with NUDT21/CPSF5; when associated with V-86." evidence="6">
    <original>N</original>
    <variation>V</variation>
    <location>
        <position position="87"/>
    </location>
</feature>
<feature type="mutagenesis site" description="Reduces affinity for UGUA RNA by 70%. Strongly reduced affinity for UGUA RNA; when associated with A-94." evidence="11">
    <original>WW</original>
    <variation>AA</variation>
    <location>
        <begin position="90"/>
        <end position="91"/>
    </location>
</feature>
<feature type="mutagenesis site" description="Strongly reduced affinity for UGUA RNA; when associated with 90-A-A-91." evidence="11">
    <original>D</original>
    <variation>A</variation>
    <location>
        <position position="94"/>
    </location>
</feature>
<feature type="mutagenesis site" description="Reduces affinity for UGUA RNA by 85%." evidence="11">
    <original>E</original>
    <variation>A</variation>
    <location>
        <position position="111"/>
    </location>
</feature>
<feature type="mutagenesis site" description="Increases affinity for UGUA RNA by 40%." evidence="11">
    <original>F</original>
    <variation>A</variation>
    <location>
        <position position="126"/>
    </location>
</feature>
<feature type="mutagenesis site" description="Reduces affinity for UGUA RNA by 40%; when associated with A-84." evidence="11">
    <original>L</original>
    <variation>A</variation>
    <location>
        <position position="128"/>
    </location>
</feature>
<feature type="mutagenesis site" description="Decreased methylation in presence of PRMT5/WDR77. Loss of methylation in presence of PRMT5/WDR77 or PRMT1; when associated with A-204 and A-206." evidence="9">
    <original>R</original>
    <variation>A</variation>
    <location>
        <position position="202"/>
    </location>
</feature>
<feature type="mutagenesis site" description="Decreased methylation in presence of PRMT5/WDR77. Loss of methylation in presence of PRMT5/WDR77 or PRMT1; when associated with A-202 and A-206." evidence="9">
    <original>R</original>
    <variation>A</variation>
    <location>
        <position position="204"/>
    </location>
</feature>
<feature type="mutagenesis site" description="Loss of methylation in presence of PRMT5/WDR77 or PRMT1." evidence="9">
    <original>R</original>
    <variation>A</variation>
    <location>
        <position position="206"/>
    </location>
</feature>
<feature type="sequence conflict" description="In Ref. 2; CAA47751/CAA47752." evidence="22" ref="2">
    <original>D</original>
    <variation>N</variation>
    <location>
        <position position="9"/>
    </location>
</feature>
<feature type="strand" evidence="29">
    <location>
        <begin position="84"/>
        <end position="87"/>
    </location>
</feature>
<feature type="helix" evidence="29">
    <location>
        <begin position="94"/>
        <end position="102"/>
    </location>
</feature>
<feature type="turn" evidence="29">
    <location>
        <begin position="103"/>
        <end position="105"/>
    </location>
</feature>
<feature type="strand" evidence="29">
    <location>
        <begin position="112"/>
        <end position="116"/>
    </location>
</feature>
<feature type="turn" evidence="29">
    <location>
        <begin position="118"/>
        <end position="120"/>
    </location>
</feature>
<feature type="strand" evidence="29">
    <location>
        <begin position="123"/>
        <end position="129"/>
    </location>
</feature>
<feature type="helix" evidence="29">
    <location>
        <begin position="134"/>
        <end position="143"/>
    </location>
</feature>
<feature type="helix" evidence="29">
    <location>
        <begin position="144"/>
        <end position="146"/>
    </location>
</feature>
<feature type="strand" evidence="29">
    <location>
        <begin position="149"/>
        <end position="151"/>
    </location>
</feature>
<feature type="strand" evidence="30">
    <location>
        <begin position="155"/>
        <end position="158"/>
    </location>
</feature>
<feature type="helix" evidence="31">
    <location>
        <begin position="161"/>
        <end position="170"/>
    </location>
</feature>
<sequence length="551" mass="59210">MADGVDHIDIYADVGEEFNQEAEYGGHDQIDLYDDVISPSANNGDAPEDRDYMDTLPPTVGDDVGKGAAPNVVYTYTGKRIALYIGNLTWWTTDEDLTEAVHSLGVNDILEIKFFENRANGQSKGFALVGVGSEASSKKLMDLLPKRELHGQNPVVTPCNKQFLSQFEMQSRKTTQSGQMSGEGKAGPPGGSSRAAFPQGGRGRGRFPGAVPGGDRFPGPAGPGGPPPPFPAGQTPPRPPLGPPGPPGPPGPPPPGQVLPPPLAGPPNRGDRPPPPVLFPGQPFGQPPLGPLPPGPPPPVPGYGPPPGPPPPQQGPPPPPGPFPPRPPGPLGPPLTLAPPPHLPGPPPGAPPPAPHVNPAFFPPPTNSGMPTSDSRGPPPTDPYGRPPPYDRGDYGPPGREMDTARTPLSEAEFEEIMNRNRAISSSAISRAVSDASAGDYGSAIETLVTAISLIKQSKVSADDRCKVLISSLQDCLHGIESKSYGSGSRRERSRERDHSRSREKSRRHKSRSRDRHDDYYRERSRERERHRDRDRDRDRERDREREYRHR</sequence>
<organism>
    <name type="scientific">Homo sapiens</name>
    <name type="common">Human</name>
    <dbReference type="NCBI Taxonomy" id="9606"/>
    <lineage>
        <taxon>Eukaryota</taxon>
        <taxon>Metazoa</taxon>
        <taxon>Chordata</taxon>
        <taxon>Craniata</taxon>
        <taxon>Vertebrata</taxon>
        <taxon>Euteleostomi</taxon>
        <taxon>Mammalia</taxon>
        <taxon>Eutheria</taxon>
        <taxon>Euarchontoglires</taxon>
        <taxon>Primates</taxon>
        <taxon>Haplorrhini</taxon>
        <taxon>Catarrhini</taxon>
        <taxon>Hominidae</taxon>
        <taxon>Homo</taxon>
    </lineage>
</organism>
<dbReference type="EMBL" id="X67336">
    <property type="protein sequence ID" value="CAA47751.1"/>
    <property type="molecule type" value="Genomic_DNA"/>
</dbReference>
<dbReference type="EMBL" id="X67337">
    <property type="protein sequence ID" value="CAA47752.1"/>
    <property type="molecule type" value="mRNA"/>
</dbReference>
<dbReference type="EMBL" id="AK223568">
    <property type="protein sequence ID" value="BAD97288.1"/>
    <property type="molecule type" value="mRNA"/>
</dbReference>
<dbReference type="EMBL" id="AK292024">
    <property type="protein sequence ID" value="BAF84713.1"/>
    <property type="molecule type" value="mRNA"/>
</dbReference>
<dbReference type="EMBL" id="CH471054">
    <property type="protein sequence ID" value="EAW97215.1"/>
    <property type="molecule type" value="Genomic_DNA"/>
</dbReference>
<dbReference type="EMBL" id="BC000714">
    <property type="protein sequence ID" value="AAH00714.1"/>
    <property type="molecule type" value="mRNA"/>
</dbReference>
<dbReference type="EMBL" id="BC005000">
    <property type="protein sequence ID" value="AAH05000.1"/>
    <property type="molecule type" value="mRNA"/>
</dbReference>
<dbReference type="CCDS" id="CCDS73494.1">
    <molecule id="Q16630-2"/>
</dbReference>
<dbReference type="CCDS" id="CCDS8988.1">
    <molecule id="Q16630-1"/>
</dbReference>
<dbReference type="PIR" id="S57447">
    <property type="entry name" value="S57447"/>
</dbReference>
<dbReference type="RefSeq" id="NP_001287876.1">
    <molecule id="Q16630-2"/>
    <property type="nucleotide sequence ID" value="NM_001300947.2"/>
</dbReference>
<dbReference type="RefSeq" id="NP_008938.2">
    <molecule id="Q16630-1"/>
    <property type="nucleotide sequence ID" value="NM_007007.3"/>
</dbReference>
<dbReference type="PDB" id="3P5T">
    <property type="method" value="X-ray"/>
    <property type="resolution" value="2.70 A"/>
    <property type="chains" value="L/M/N/O/P/Q=80-161"/>
</dbReference>
<dbReference type="PDB" id="3P6Y">
    <property type="method" value="X-ray"/>
    <property type="resolution" value="2.90 A"/>
    <property type="chains" value="C/D/G/H/K/L/O/P=80-161"/>
</dbReference>
<dbReference type="PDB" id="3Q2S">
    <property type="method" value="X-ray"/>
    <property type="resolution" value="2.90 A"/>
    <property type="chains" value="C/D=13-235"/>
</dbReference>
<dbReference type="PDB" id="3Q2T">
    <property type="method" value="X-ray"/>
    <property type="resolution" value="3.06 A"/>
    <property type="chains" value="C/D=13-235"/>
</dbReference>
<dbReference type="PDB" id="4B4N">
    <property type="method" value="X-ray"/>
    <property type="resolution" value="1.81 A"/>
    <property type="chains" value="B=276-290"/>
</dbReference>
<dbReference type="PDB" id="4U0A">
    <property type="method" value="X-ray"/>
    <property type="resolution" value="2.05 A"/>
    <property type="chains" value="B=276-290"/>
</dbReference>
<dbReference type="PDB" id="4U0B">
    <property type="method" value="X-ray"/>
    <property type="resolution" value="2.80 A"/>
    <property type="chains" value="M/N/O/P/Q/R/S/T/U/V/W/X=276-290"/>
</dbReference>
<dbReference type="PDB" id="4WYM">
    <property type="method" value="X-ray"/>
    <property type="resolution" value="2.60 A"/>
    <property type="chains" value="M/N/O/P/Q/R/S/T/U/V/W=276-290"/>
</dbReference>
<dbReference type="PDB" id="6AY9">
    <property type="method" value="X-ray"/>
    <property type="resolution" value="2.50 A"/>
    <property type="chains" value="B=276-287"/>
</dbReference>
<dbReference type="PDB" id="6GX9">
    <property type="method" value="X-ray"/>
    <property type="resolution" value="2.70 A"/>
    <property type="chains" value="C/D=481-550"/>
</dbReference>
<dbReference type="PDB" id="7SNQ">
    <property type="method" value="X-ray"/>
    <property type="resolution" value="2.81 A"/>
    <property type="chains" value="M/N/O/P/Q/R/S/T/U/V/W/X=276-290"/>
</dbReference>
<dbReference type="PDB" id="7ZUD">
    <property type="method" value="X-ray"/>
    <property type="resolution" value="2.93 A"/>
    <property type="chains" value="M=276-288"/>
</dbReference>
<dbReference type="PDB" id="8CL1">
    <property type="method" value="EM"/>
    <property type="resolution" value="3.35 A"/>
    <property type="chains" value="B=276-290"/>
</dbReference>
<dbReference type="PDB" id="8EJL">
    <property type="method" value="EM"/>
    <property type="resolution" value="3.90 A"/>
    <property type="chains" value="Y/Z=276-290"/>
</dbReference>
<dbReference type="PDB" id="8GDV">
    <property type="method" value="X-ray"/>
    <property type="resolution" value="3.30 A"/>
    <property type="chains" value="M/N/O/P/Q/R=276-290"/>
</dbReference>
<dbReference type="PDB" id="9CNV">
    <property type="method" value="EM"/>
    <property type="resolution" value="3.16 A"/>
    <property type="chains" value="B=276-290"/>
</dbReference>
<dbReference type="PDBsum" id="3P5T"/>
<dbReference type="PDBsum" id="3P6Y"/>
<dbReference type="PDBsum" id="3Q2S"/>
<dbReference type="PDBsum" id="3Q2T"/>
<dbReference type="PDBsum" id="4B4N"/>
<dbReference type="PDBsum" id="4U0A"/>
<dbReference type="PDBsum" id="4U0B"/>
<dbReference type="PDBsum" id="4WYM"/>
<dbReference type="PDBsum" id="6AY9"/>
<dbReference type="PDBsum" id="6GX9"/>
<dbReference type="PDBsum" id="7SNQ"/>
<dbReference type="PDBsum" id="7ZUD"/>
<dbReference type="PDBsum" id="8CL1"/>
<dbReference type="PDBsum" id="8EJL"/>
<dbReference type="PDBsum" id="8GDV"/>
<dbReference type="PDBsum" id="9CNV"/>
<dbReference type="EMDB" id="EMD-16709"/>
<dbReference type="EMDB" id="EMD-28186"/>
<dbReference type="EMDB" id="EMD-45761"/>
<dbReference type="SMR" id="Q16630"/>
<dbReference type="BioGRID" id="116238">
    <property type="interactions" value="527"/>
</dbReference>
<dbReference type="ComplexPortal" id="CPX-941">
    <property type="entry name" value="mRNA cleavage factor I(m) complex, CPSF6 variant"/>
</dbReference>
<dbReference type="CORUM" id="Q16630"/>
<dbReference type="DIP" id="DIP-34501N"/>
<dbReference type="FunCoup" id="Q16630">
    <property type="interactions" value="4686"/>
</dbReference>
<dbReference type="IntAct" id="Q16630">
    <property type="interactions" value="420"/>
</dbReference>
<dbReference type="MINT" id="Q16630"/>
<dbReference type="STRING" id="9606.ENSP00000266679"/>
<dbReference type="GlyGen" id="Q16630">
    <property type="glycosylation" value="2 sites, 1 O-linked glycan (1 site)"/>
</dbReference>
<dbReference type="iPTMnet" id="Q16630"/>
<dbReference type="MetOSite" id="Q16630"/>
<dbReference type="PhosphoSitePlus" id="Q16630"/>
<dbReference type="SwissPalm" id="Q16630"/>
<dbReference type="BioMuta" id="CPSF6"/>
<dbReference type="DMDM" id="88909266"/>
<dbReference type="jPOST" id="Q16630"/>
<dbReference type="MassIVE" id="Q16630"/>
<dbReference type="PeptideAtlas" id="Q16630"/>
<dbReference type="ProteomicsDB" id="60979">
    <molecule id="Q16630-1"/>
</dbReference>
<dbReference type="ProteomicsDB" id="60980">
    <molecule id="Q16630-2"/>
</dbReference>
<dbReference type="ProteomicsDB" id="60981">
    <molecule id="Q16630-3"/>
</dbReference>
<dbReference type="Pumba" id="Q16630"/>
<dbReference type="Antibodypedia" id="29392">
    <property type="antibodies" value="237 antibodies from 29 providers"/>
</dbReference>
<dbReference type="DNASU" id="11052"/>
<dbReference type="Ensembl" id="ENST00000266679.8">
    <molecule id="Q16630-2"/>
    <property type="protein sequence ID" value="ENSP00000266679.8"/>
    <property type="gene ID" value="ENSG00000111605.18"/>
</dbReference>
<dbReference type="Ensembl" id="ENST00000435070.7">
    <molecule id="Q16630-1"/>
    <property type="protein sequence ID" value="ENSP00000391774.2"/>
    <property type="gene ID" value="ENSG00000111605.18"/>
</dbReference>
<dbReference type="GeneID" id="11052"/>
<dbReference type="KEGG" id="hsa:11052"/>
<dbReference type="MANE-Select" id="ENST00000435070.7">
    <property type="protein sequence ID" value="ENSP00000391774.2"/>
    <property type="RefSeq nucleotide sequence ID" value="NM_007007.3"/>
    <property type="RefSeq protein sequence ID" value="NP_008938.2"/>
</dbReference>
<dbReference type="UCSC" id="uc001sut.4">
    <molecule id="Q16630-1"/>
    <property type="organism name" value="human"/>
</dbReference>
<dbReference type="AGR" id="HGNC:13871"/>
<dbReference type="CTD" id="11052"/>
<dbReference type="DisGeNET" id="11052"/>
<dbReference type="GeneCards" id="CPSF6"/>
<dbReference type="HGNC" id="HGNC:13871">
    <property type="gene designation" value="CPSF6"/>
</dbReference>
<dbReference type="HPA" id="ENSG00000111605">
    <property type="expression patterns" value="Low tissue specificity"/>
</dbReference>
<dbReference type="MIM" id="604979">
    <property type="type" value="gene"/>
</dbReference>
<dbReference type="neXtProt" id="NX_Q16630"/>
<dbReference type="OpenTargets" id="ENSG00000111605"/>
<dbReference type="PharmGKB" id="PA26846"/>
<dbReference type="VEuPathDB" id="HostDB:ENSG00000111605"/>
<dbReference type="eggNOG" id="KOG4849">
    <property type="taxonomic scope" value="Eukaryota"/>
</dbReference>
<dbReference type="GeneTree" id="ENSGT00730000110905"/>
<dbReference type="InParanoid" id="Q16630"/>
<dbReference type="OMA" id="CTRQNLN"/>
<dbReference type="OrthoDB" id="10065185at2759"/>
<dbReference type="PAN-GO" id="Q16630">
    <property type="GO annotations" value="4 GO annotations based on evolutionary models"/>
</dbReference>
<dbReference type="PhylomeDB" id="Q16630"/>
<dbReference type="TreeFam" id="TF316430"/>
<dbReference type="PathwayCommons" id="Q16630"/>
<dbReference type="Reactome" id="R-HSA-1839117">
    <property type="pathway name" value="Signaling by cytosolic FGFR1 fusion mutants"/>
</dbReference>
<dbReference type="Reactome" id="R-HSA-5655302">
    <property type="pathway name" value="Signaling by FGFR1 in disease"/>
</dbReference>
<dbReference type="Reactome" id="R-HSA-72187">
    <property type="pathway name" value="mRNA 3'-end processing"/>
</dbReference>
<dbReference type="Reactome" id="R-HSA-72203">
    <property type="pathway name" value="Processing of Capped Intron-Containing Pre-mRNA"/>
</dbReference>
<dbReference type="Reactome" id="R-HSA-73856">
    <property type="pathway name" value="RNA Polymerase II Transcription Termination"/>
</dbReference>
<dbReference type="Reactome" id="R-HSA-77595">
    <property type="pathway name" value="Processing of Intronless Pre-mRNAs"/>
</dbReference>
<dbReference type="SignaLink" id="Q16630"/>
<dbReference type="SIGNOR" id="Q16630"/>
<dbReference type="BioGRID-ORCS" id="11052">
    <property type="hits" value="688 hits in 1172 CRISPR screens"/>
</dbReference>
<dbReference type="CD-CODE" id="1A18FFC4">
    <property type="entry name" value="Paraspeckle"/>
</dbReference>
<dbReference type="CD-CODE" id="232F8A39">
    <property type="entry name" value="P-body"/>
</dbReference>
<dbReference type="CD-CODE" id="804901D1">
    <property type="entry name" value="Nuclear speckle"/>
</dbReference>
<dbReference type="CD-CODE" id="91857CE7">
    <property type="entry name" value="Nucleolus"/>
</dbReference>
<dbReference type="CD-CODE" id="DEE660B4">
    <property type="entry name" value="Stress granule"/>
</dbReference>
<dbReference type="ChiTaRS" id="CPSF6">
    <property type="organism name" value="human"/>
</dbReference>
<dbReference type="EvolutionaryTrace" id="Q16630"/>
<dbReference type="GeneWiki" id="CPSF6"/>
<dbReference type="GenomeRNAi" id="11052"/>
<dbReference type="Pharos" id="Q16630">
    <property type="development level" value="Tbio"/>
</dbReference>
<dbReference type="PRO" id="PR:Q16630"/>
<dbReference type="Proteomes" id="UP000005640">
    <property type="component" value="Chromosome 12"/>
</dbReference>
<dbReference type="RNAct" id="Q16630">
    <property type="molecule type" value="protein"/>
</dbReference>
<dbReference type="Bgee" id="ENSG00000111605">
    <property type="expression patterns" value="Expressed in ganglionic eminence and 203 other cell types or tissues"/>
</dbReference>
<dbReference type="ExpressionAtlas" id="Q16630">
    <property type="expression patterns" value="baseline and differential"/>
</dbReference>
<dbReference type="GO" id="GO:0005737">
    <property type="term" value="C:cytoplasm"/>
    <property type="evidence" value="ECO:0000314"/>
    <property type="project" value="UniProtKB"/>
</dbReference>
<dbReference type="GO" id="GO:0035061">
    <property type="term" value="C:interchromatin granule"/>
    <property type="evidence" value="ECO:0000314"/>
    <property type="project" value="UniProtKB"/>
</dbReference>
<dbReference type="GO" id="GO:0016020">
    <property type="term" value="C:membrane"/>
    <property type="evidence" value="ECO:0007005"/>
    <property type="project" value="UniProtKB"/>
</dbReference>
<dbReference type="GO" id="GO:0005847">
    <property type="term" value="C:mRNA cleavage and polyadenylation specificity factor complex"/>
    <property type="evidence" value="ECO:0000314"/>
    <property type="project" value="UniProtKB"/>
</dbReference>
<dbReference type="GO" id="GO:0005849">
    <property type="term" value="C:mRNA cleavage factor complex"/>
    <property type="evidence" value="ECO:0000314"/>
    <property type="project" value="UniProtKB"/>
</dbReference>
<dbReference type="GO" id="GO:0016607">
    <property type="term" value="C:nuclear speck"/>
    <property type="evidence" value="ECO:0000314"/>
    <property type="project" value="HPA"/>
</dbReference>
<dbReference type="GO" id="GO:0005654">
    <property type="term" value="C:nucleoplasm"/>
    <property type="evidence" value="ECO:0000314"/>
    <property type="project" value="HPA"/>
</dbReference>
<dbReference type="GO" id="GO:0005634">
    <property type="term" value="C:nucleus"/>
    <property type="evidence" value="ECO:0000314"/>
    <property type="project" value="UniProtKB"/>
</dbReference>
<dbReference type="GO" id="GO:0042382">
    <property type="term" value="C:paraspeckles"/>
    <property type="evidence" value="ECO:0000314"/>
    <property type="project" value="UniProtKB"/>
</dbReference>
<dbReference type="GO" id="GO:0005726">
    <property type="term" value="C:perichromatin fibrils"/>
    <property type="evidence" value="ECO:0000314"/>
    <property type="project" value="UniProtKB"/>
</dbReference>
<dbReference type="GO" id="GO:1990904">
    <property type="term" value="C:ribonucleoprotein complex"/>
    <property type="evidence" value="ECO:0000314"/>
    <property type="project" value="MGI"/>
</dbReference>
<dbReference type="GO" id="GO:1990448">
    <property type="term" value="F:exon-exon junction complex binding"/>
    <property type="evidence" value="ECO:0000314"/>
    <property type="project" value="UniProtKB"/>
</dbReference>
<dbReference type="GO" id="GO:0003729">
    <property type="term" value="F:mRNA binding"/>
    <property type="evidence" value="ECO:0000314"/>
    <property type="project" value="UniProtKB"/>
</dbReference>
<dbReference type="GO" id="GO:0043023">
    <property type="term" value="F:ribosomal large subunit binding"/>
    <property type="evidence" value="ECO:0000314"/>
    <property type="project" value="UniProtKB"/>
</dbReference>
<dbReference type="GO" id="GO:0003723">
    <property type="term" value="F:RNA binding"/>
    <property type="evidence" value="ECO:0007005"/>
    <property type="project" value="UniProtKB"/>
</dbReference>
<dbReference type="GO" id="GO:0180010">
    <property type="term" value="P:co-transcriptional mRNA 3'-end processing, cleavage and polyadenylation pathway"/>
    <property type="evidence" value="ECO:0000314"/>
    <property type="project" value="UniProtKB"/>
</dbReference>
<dbReference type="GO" id="GO:0031124">
    <property type="term" value="P:mRNA 3'-end processing"/>
    <property type="evidence" value="ECO:0000314"/>
    <property type="project" value="ComplexPortal"/>
</dbReference>
<dbReference type="GO" id="GO:0110104">
    <property type="term" value="P:mRNA alternative polyadenylation"/>
    <property type="evidence" value="ECO:0000315"/>
    <property type="project" value="UniProtKB"/>
</dbReference>
<dbReference type="GO" id="GO:0006397">
    <property type="term" value="P:mRNA processing"/>
    <property type="evidence" value="ECO:0000314"/>
    <property type="project" value="UniProtKB"/>
</dbReference>
<dbReference type="GO" id="GO:0046833">
    <property type="term" value="P:positive regulation of RNA export from nucleus"/>
    <property type="evidence" value="ECO:0000315"/>
    <property type="project" value="UniProtKB"/>
</dbReference>
<dbReference type="GO" id="GO:0051290">
    <property type="term" value="P:protein heterotetramerization"/>
    <property type="evidence" value="ECO:0000314"/>
    <property type="project" value="UniProtKB"/>
</dbReference>
<dbReference type="GO" id="GO:0051262">
    <property type="term" value="P:protein tetramerization"/>
    <property type="evidence" value="ECO:0000314"/>
    <property type="project" value="UniProtKB"/>
</dbReference>
<dbReference type="CDD" id="cd12643">
    <property type="entry name" value="RRM_CFIm68"/>
    <property type="match status" value="1"/>
</dbReference>
<dbReference type="DisProt" id="DP02869"/>
<dbReference type="FunFam" id="3.30.70.330:FF:000081">
    <property type="entry name" value="Cleavage and polyadenylation specificity factor subunit 6"/>
    <property type="match status" value="1"/>
</dbReference>
<dbReference type="Gene3D" id="3.30.70.330">
    <property type="match status" value="1"/>
</dbReference>
<dbReference type="InterPro" id="IPR034772">
    <property type="entry name" value="CPSF6/7"/>
</dbReference>
<dbReference type="InterPro" id="IPR034769">
    <property type="entry name" value="CPSF6_RRM"/>
</dbReference>
<dbReference type="InterPro" id="IPR012677">
    <property type="entry name" value="Nucleotide-bd_a/b_plait_sf"/>
</dbReference>
<dbReference type="InterPro" id="IPR035979">
    <property type="entry name" value="RBD_domain_sf"/>
</dbReference>
<dbReference type="InterPro" id="IPR000504">
    <property type="entry name" value="RRM_dom"/>
</dbReference>
<dbReference type="PANTHER" id="PTHR23204">
    <property type="entry name" value="CLEAVAGE AND POLYADENYLATION SPECIFIC FACTOR"/>
    <property type="match status" value="1"/>
</dbReference>
<dbReference type="Pfam" id="PF00076">
    <property type="entry name" value="RRM_1"/>
    <property type="match status" value="1"/>
</dbReference>
<dbReference type="SMART" id="SM00360">
    <property type="entry name" value="RRM"/>
    <property type="match status" value="1"/>
</dbReference>
<dbReference type="SUPFAM" id="SSF54928">
    <property type="entry name" value="RNA-binding domain, RBD"/>
    <property type="match status" value="1"/>
</dbReference>
<dbReference type="PROSITE" id="PS50102">
    <property type="entry name" value="RRM"/>
    <property type="match status" value="1"/>
</dbReference>
<gene>
    <name evidence="24" type="primary">CPSF6</name>
    <name evidence="21" type="synonym">CFIM68</name>
</gene>
<proteinExistence type="evidence at protein level"/>
<accession>Q16630</accession>
<accession>A8K7K9</accession>
<accession>Q53ES1</accession>
<accession>Q9BSJ7</accession>
<accession>Q9BW18</accession>